<proteinExistence type="evidence at transcript level"/>
<evidence type="ECO:0000250" key="1"/>
<evidence type="ECO:0000255" key="2">
    <source>
        <dbReference type="PROSITE-ProRule" id="PRU01001"/>
    </source>
</evidence>
<evidence type="ECO:0000255" key="3">
    <source>
        <dbReference type="PROSITE-ProRule" id="PRU01002"/>
    </source>
</evidence>
<evidence type="ECO:0000256" key="4">
    <source>
        <dbReference type="SAM" id="MobiDB-lite"/>
    </source>
</evidence>
<evidence type="ECO:0000269" key="5">
    <source>
    </source>
</evidence>
<evidence type="ECO:0000269" key="6">
    <source>
    </source>
</evidence>
<evidence type="ECO:0000269" key="7">
    <source>
    </source>
</evidence>
<evidence type="ECO:0000305" key="8"/>
<organism>
    <name type="scientific">Arabidopsis thaliana</name>
    <name type="common">Mouse-ear cress</name>
    <dbReference type="NCBI Taxonomy" id="3702"/>
    <lineage>
        <taxon>Eukaryota</taxon>
        <taxon>Viridiplantae</taxon>
        <taxon>Streptophyta</taxon>
        <taxon>Embryophyta</taxon>
        <taxon>Tracheophyta</taxon>
        <taxon>Spermatophyta</taxon>
        <taxon>Magnoliopsida</taxon>
        <taxon>eudicotyledons</taxon>
        <taxon>Gunneridae</taxon>
        <taxon>Pentapetalae</taxon>
        <taxon>rosids</taxon>
        <taxon>malvids</taxon>
        <taxon>Brassicales</taxon>
        <taxon>Brassicaceae</taxon>
        <taxon>Camelineae</taxon>
        <taxon>Arabidopsis</taxon>
    </lineage>
</organism>
<feature type="chain" id="PRO_0000419299" description="Growth-regulating factor 8">
    <location>
        <begin position="1"/>
        <end position="493"/>
    </location>
</feature>
<feature type="domain" description="QLQ" evidence="2">
    <location>
        <begin position="149"/>
        <end position="184"/>
    </location>
</feature>
<feature type="domain" description="WRC" evidence="3">
    <location>
        <begin position="243"/>
        <end position="287"/>
    </location>
</feature>
<feature type="region of interest" description="Disordered" evidence="4">
    <location>
        <begin position="270"/>
        <end position="302"/>
    </location>
</feature>
<feature type="short sequence motif" description="Bipartite nuclear localization signal" evidence="3">
    <location>
        <begin position="248"/>
        <end position="258"/>
    </location>
</feature>
<feature type="short sequence motif" description="Bipartite nuclear localization signal" evidence="3">
    <location>
        <begin position="276"/>
        <end position="283"/>
    </location>
</feature>
<feature type="compositionally biased region" description="Basic residues" evidence="4">
    <location>
        <begin position="273"/>
        <end position="283"/>
    </location>
</feature>
<gene>
    <name type="primary">GRF8</name>
    <name type="ordered locus">At4g24150</name>
    <name type="ORF">T19F6.5</name>
</gene>
<keyword id="KW-0010">Activator</keyword>
<keyword id="KW-0539">Nucleus</keyword>
<keyword id="KW-1185">Reference proteome</keyword>
<keyword id="KW-0804">Transcription</keyword>
<keyword id="KW-0805">Transcription regulation</keyword>
<comment type="function">
    <text evidence="1">Transcription activator that plays a role in the regulation of cell expansion in leaf and cotyledons tissues. Component of a network formed by miR396, the GRFs and their interacting factors (GIFs) acting in the regulation of meristem function, at least partially through the control of cell proliferation.</text>
</comment>
<comment type="subcellular location">
    <subcellularLocation>
        <location evidence="3">Nucleus</location>
    </subcellularLocation>
</comment>
<comment type="tissue specificity">
    <text evidence="5">Predominantly expressed in shoot tips and flowers.</text>
</comment>
<comment type="induction">
    <text evidence="6 7">microRNA 396 (miR396a or miR396b) negatively regulates growth-regulating factors (GRF1-4 and GRF7-9).</text>
</comment>
<comment type="domain">
    <text>The QLQ domain and WRC domain may be involved in protein-protein interaction and DNA-binding, respectively.</text>
</comment>
<comment type="similarity">
    <text evidence="8">Belongs to the GRF family.</text>
</comment>
<comment type="sequence caution" evidence="8">
    <conflict type="erroneous gene model prediction">
        <sequence resource="EMBL-CDS" id="AAB63610"/>
    </conflict>
</comment>
<dbReference type="EMBL" id="AC002343">
    <property type="protein sequence ID" value="AAB63610.1"/>
    <property type="status" value="ALT_SEQ"/>
    <property type="molecule type" value="Genomic_DNA"/>
</dbReference>
<dbReference type="EMBL" id="AL109619">
    <property type="protein sequence ID" value="CAB51658.1"/>
    <property type="molecule type" value="Genomic_DNA"/>
</dbReference>
<dbReference type="EMBL" id="CP002687">
    <property type="protein sequence ID" value="AEE84855.1"/>
    <property type="molecule type" value="Genomic_DNA"/>
</dbReference>
<dbReference type="PIR" id="T13463">
    <property type="entry name" value="T13463"/>
</dbReference>
<dbReference type="RefSeq" id="NP_001329477.1">
    <property type="nucleotide sequence ID" value="NM_001341645.1"/>
</dbReference>
<dbReference type="RefSeq" id="NP_194146.1">
    <property type="nucleotide sequence ID" value="NM_118547.2"/>
</dbReference>
<dbReference type="BioGRID" id="13804">
    <property type="interactions" value="3"/>
</dbReference>
<dbReference type="STRING" id="3702.Q9SU44"/>
<dbReference type="GlyGen" id="Q9SU44">
    <property type="glycosylation" value="1 site"/>
</dbReference>
<dbReference type="PaxDb" id="3702-AT4G24150.1"/>
<dbReference type="ProteomicsDB" id="247288"/>
<dbReference type="EnsemblPlants" id="AT4G24150.1">
    <property type="protein sequence ID" value="AT4G24150.1"/>
    <property type="gene ID" value="AT4G24150"/>
</dbReference>
<dbReference type="GeneID" id="828515"/>
<dbReference type="Gramene" id="AT4G24150.1">
    <property type="protein sequence ID" value="AT4G24150.1"/>
    <property type="gene ID" value="AT4G24150"/>
</dbReference>
<dbReference type="KEGG" id="ath:AT4G24150"/>
<dbReference type="Araport" id="AT4G24150"/>
<dbReference type="TAIR" id="AT4G24150">
    <property type="gene designation" value="GRF8"/>
</dbReference>
<dbReference type="eggNOG" id="ENOG502QVQ2">
    <property type="taxonomic scope" value="Eukaryota"/>
</dbReference>
<dbReference type="HOGENOM" id="CLU_636719_0_0_1"/>
<dbReference type="InParanoid" id="Q9SU44"/>
<dbReference type="PhylomeDB" id="Q9SU44"/>
<dbReference type="PRO" id="PR:Q9SU44"/>
<dbReference type="Proteomes" id="UP000006548">
    <property type="component" value="Chromosome 4"/>
</dbReference>
<dbReference type="ExpressionAtlas" id="Q9SU44">
    <property type="expression patterns" value="baseline and differential"/>
</dbReference>
<dbReference type="GO" id="GO:0009941">
    <property type="term" value="C:chloroplast envelope"/>
    <property type="evidence" value="ECO:0007005"/>
    <property type="project" value="TAIR"/>
</dbReference>
<dbReference type="GO" id="GO:0005634">
    <property type="term" value="C:nucleus"/>
    <property type="evidence" value="ECO:0000250"/>
    <property type="project" value="TAIR"/>
</dbReference>
<dbReference type="GO" id="GO:0005524">
    <property type="term" value="F:ATP binding"/>
    <property type="evidence" value="ECO:0007669"/>
    <property type="project" value="InterPro"/>
</dbReference>
<dbReference type="GO" id="GO:0006351">
    <property type="term" value="P:DNA-templated transcription"/>
    <property type="evidence" value="ECO:0007669"/>
    <property type="project" value="InterPro"/>
</dbReference>
<dbReference type="GO" id="GO:0048366">
    <property type="term" value="P:leaf development"/>
    <property type="evidence" value="ECO:0000304"/>
    <property type="project" value="TAIR"/>
</dbReference>
<dbReference type="GO" id="GO:0006355">
    <property type="term" value="P:regulation of DNA-templated transcription"/>
    <property type="evidence" value="ECO:0007669"/>
    <property type="project" value="InterPro"/>
</dbReference>
<dbReference type="InterPro" id="IPR014978">
    <property type="entry name" value="Gln-Leu-Gln_QLQ"/>
</dbReference>
<dbReference type="InterPro" id="IPR031137">
    <property type="entry name" value="GRF"/>
</dbReference>
<dbReference type="InterPro" id="IPR014977">
    <property type="entry name" value="WRC_dom"/>
</dbReference>
<dbReference type="PANTHER" id="PTHR31602">
    <property type="entry name" value="GROWTH-REGULATING FACTOR 5"/>
    <property type="match status" value="1"/>
</dbReference>
<dbReference type="PANTHER" id="PTHR31602:SF3">
    <property type="entry name" value="GROWTH-REGULATING FACTOR 8"/>
    <property type="match status" value="1"/>
</dbReference>
<dbReference type="Pfam" id="PF08880">
    <property type="entry name" value="QLQ"/>
    <property type="match status" value="1"/>
</dbReference>
<dbReference type="Pfam" id="PF08879">
    <property type="entry name" value="WRC"/>
    <property type="match status" value="1"/>
</dbReference>
<dbReference type="SMART" id="SM00951">
    <property type="entry name" value="QLQ"/>
    <property type="match status" value="1"/>
</dbReference>
<dbReference type="PROSITE" id="PS51666">
    <property type="entry name" value="QLQ"/>
    <property type="match status" value="1"/>
</dbReference>
<dbReference type="PROSITE" id="PS51667">
    <property type="entry name" value="WRC"/>
    <property type="match status" value="1"/>
</dbReference>
<name>GRF8_ARATH</name>
<protein>
    <recommendedName>
        <fullName>Growth-regulating factor 8</fullName>
        <shortName>AtGRF8</shortName>
    </recommendedName>
    <alternativeName>
        <fullName>Transcription activator GRF8</fullName>
    </alternativeName>
</protein>
<accession>Q9SU44</accession>
<accession>O22976</accession>
<reference key="1">
    <citation type="journal article" date="1999" name="Nature">
        <title>Sequence and analysis of chromosome 4 of the plant Arabidopsis thaliana.</title>
        <authorList>
            <person name="Mayer K.F.X."/>
            <person name="Schueller C."/>
            <person name="Wambutt R."/>
            <person name="Murphy G."/>
            <person name="Volckaert G."/>
            <person name="Pohl T."/>
            <person name="Duesterhoeft A."/>
            <person name="Stiekema W."/>
            <person name="Entian K.-D."/>
            <person name="Terryn N."/>
            <person name="Harris B."/>
            <person name="Ansorge W."/>
            <person name="Brandt P."/>
            <person name="Grivell L.A."/>
            <person name="Rieger M."/>
            <person name="Weichselgartner M."/>
            <person name="de Simone V."/>
            <person name="Obermaier B."/>
            <person name="Mache R."/>
            <person name="Mueller M."/>
            <person name="Kreis M."/>
            <person name="Delseny M."/>
            <person name="Puigdomenech P."/>
            <person name="Watson M."/>
            <person name="Schmidtheini T."/>
            <person name="Reichert B."/>
            <person name="Portetelle D."/>
            <person name="Perez-Alonso M."/>
            <person name="Boutry M."/>
            <person name="Bancroft I."/>
            <person name="Vos P."/>
            <person name="Hoheisel J."/>
            <person name="Zimmermann W."/>
            <person name="Wedler H."/>
            <person name="Ridley P."/>
            <person name="Langham S.-A."/>
            <person name="McCullagh B."/>
            <person name="Bilham L."/>
            <person name="Robben J."/>
            <person name="van der Schueren J."/>
            <person name="Grymonprez B."/>
            <person name="Chuang Y.-J."/>
            <person name="Vandenbussche F."/>
            <person name="Braeken M."/>
            <person name="Weltjens I."/>
            <person name="Voet M."/>
            <person name="Bastiaens I."/>
            <person name="Aert R."/>
            <person name="Defoor E."/>
            <person name="Weitzenegger T."/>
            <person name="Bothe G."/>
            <person name="Ramsperger U."/>
            <person name="Hilbert H."/>
            <person name="Braun M."/>
            <person name="Holzer E."/>
            <person name="Brandt A."/>
            <person name="Peters S."/>
            <person name="van Staveren M."/>
            <person name="Dirkse W."/>
            <person name="Mooijman P."/>
            <person name="Klein Lankhorst R."/>
            <person name="Rose M."/>
            <person name="Hauf J."/>
            <person name="Koetter P."/>
            <person name="Berneiser S."/>
            <person name="Hempel S."/>
            <person name="Feldpausch M."/>
            <person name="Lamberth S."/>
            <person name="Van den Daele H."/>
            <person name="De Keyser A."/>
            <person name="Buysshaert C."/>
            <person name="Gielen J."/>
            <person name="Villarroel R."/>
            <person name="De Clercq R."/>
            <person name="van Montagu M."/>
            <person name="Rogers J."/>
            <person name="Cronin A."/>
            <person name="Quail M.A."/>
            <person name="Bray-Allen S."/>
            <person name="Clark L."/>
            <person name="Doggett J."/>
            <person name="Hall S."/>
            <person name="Kay M."/>
            <person name="Lennard N."/>
            <person name="McLay K."/>
            <person name="Mayes R."/>
            <person name="Pettett A."/>
            <person name="Rajandream M.A."/>
            <person name="Lyne M."/>
            <person name="Benes V."/>
            <person name="Rechmann S."/>
            <person name="Borkova D."/>
            <person name="Bloecker H."/>
            <person name="Scharfe M."/>
            <person name="Grimm M."/>
            <person name="Loehnert T.-H."/>
            <person name="Dose S."/>
            <person name="de Haan M."/>
            <person name="Maarse A.C."/>
            <person name="Schaefer M."/>
            <person name="Mueller-Auer S."/>
            <person name="Gabel C."/>
            <person name="Fuchs M."/>
            <person name="Fartmann B."/>
            <person name="Granderath K."/>
            <person name="Dauner D."/>
            <person name="Herzl A."/>
            <person name="Neumann S."/>
            <person name="Argiriou A."/>
            <person name="Vitale D."/>
            <person name="Liguori R."/>
            <person name="Piravandi E."/>
            <person name="Massenet O."/>
            <person name="Quigley F."/>
            <person name="Clabauld G."/>
            <person name="Muendlein A."/>
            <person name="Felber R."/>
            <person name="Schnabl S."/>
            <person name="Hiller R."/>
            <person name="Schmidt W."/>
            <person name="Lecharny A."/>
            <person name="Aubourg S."/>
            <person name="Chefdor F."/>
            <person name="Cooke R."/>
            <person name="Berger C."/>
            <person name="Monfort A."/>
            <person name="Casacuberta E."/>
            <person name="Gibbons T."/>
            <person name="Weber N."/>
            <person name="Vandenbol M."/>
            <person name="Bargues M."/>
            <person name="Terol J."/>
            <person name="Torres A."/>
            <person name="Perez-Perez A."/>
            <person name="Purnelle B."/>
            <person name="Bent E."/>
            <person name="Johnson S."/>
            <person name="Tacon D."/>
            <person name="Jesse T."/>
            <person name="Heijnen L."/>
            <person name="Schwarz S."/>
            <person name="Scholler P."/>
            <person name="Heber S."/>
            <person name="Francs P."/>
            <person name="Bielke C."/>
            <person name="Frishman D."/>
            <person name="Haase D."/>
            <person name="Lemcke K."/>
            <person name="Mewes H.-W."/>
            <person name="Stocker S."/>
            <person name="Zaccaria P."/>
            <person name="Bevan M."/>
            <person name="Wilson R.K."/>
            <person name="de la Bastide M."/>
            <person name="Habermann K."/>
            <person name="Parnell L."/>
            <person name="Dedhia N."/>
            <person name="Gnoj L."/>
            <person name="Schutz K."/>
            <person name="Huang E."/>
            <person name="Spiegel L."/>
            <person name="Sekhon M."/>
            <person name="Murray J."/>
            <person name="Sheet P."/>
            <person name="Cordes M."/>
            <person name="Abu-Threideh J."/>
            <person name="Stoneking T."/>
            <person name="Kalicki J."/>
            <person name="Graves T."/>
            <person name="Harmon G."/>
            <person name="Edwards J."/>
            <person name="Latreille P."/>
            <person name="Courtney L."/>
            <person name="Cloud J."/>
            <person name="Abbott A."/>
            <person name="Scott K."/>
            <person name="Johnson D."/>
            <person name="Minx P."/>
            <person name="Bentley D."/>
            <person name="Fulton B."/>
            <person name="Miller N."/>
            <person name="Greco T."/>
            <person name="Kemp K."/>
            <person name="Kramer J."/>
            <person name="Fulton L."/>
            <person name="Mardis E."/>
            <person name="Dante M."/>
            <person name="Pepin K."/>
            <person name="Hillier L.W."/>
            <person name="Nelson J."/>
            <person name="Spieth J."/>
            <person name="Ryan E."/>
            <person name="Andrews S."/>
            <person name="Geisel C."/>
            <person name="Layman D."/>
            <person name="Du H."/>
            <person name="Ali J."/>
            <person name="Berghoff A."/>
            <person name="Jones K."/>
            <person name="Drone K."/>
            <person name="Cotton M."/>
            <person name="Joshu C."/>
            <person name="Antonoiu B."/>
            <person name="Zidanic M."/>
            <person name="Strong C."/>
            <person name="Sun H."/>
            <person name="Lamar B."/>
            <person name="Yordan C."/>
            <person name="Ma P."/>
            <person name="Zhong J."/>
            <person name="Preston R."/>
            <person name="Vil D."/>
            <person name="Shekher M."/>
            <person name="Matero A."/>
            <person name="Shah R."/>
            <person name="Swaby I.K."/>
            <person name="O'Shaughnessy A."/>
            <person name="Rodriguez M."/>
            <person name="Hoffman J."/>
            <person name="Till S."/>
            <person name="Granat S."/>
            <person name="Shohdy N."/>
            <person name="Hasegawa A."/>
            <person name="Hameed A."/>
            <person name="Lodhi M."/>
            <person name="Johnson A."/>
            <person name="Chen E."/>
            <person name="Marra M.A."/>
            <person name="Martienssen R."/>
            <person name="McCombie W.R."/>
        </authorList>
    </citation>
    <scope>NUCLEOTIDE SEQUENCE [LARGE SCALE GENOMIC DNA]</scope>
    <source>
        <strain>cv. Columbia</strain>
    </source>
</reference>
<reference key="2">
    <citation type="journal article" date="2017" name="Plant J.">
        <title>Araport11: a complete reannotation of the Arabidopsis thaliana reference genome.</title>
        <authorList>
            <person name="Cheng C.Y."/>
            <person name="Krishnakumar V."/>
            <person name="Chan A.P."/>
            <person name="Thibaud-Nissen F."/>
            <person name="Schobel S."/>
            <person name="Town C.D."/>
        </authorList>
    </citation>
    <scope>GENOME REANNOTATION</scope>
    <source>
        <strain>cv. Columbia</strain>
    </source>
</reference>
<reference key="3">
    <citation type="journal article" date="2003" name="Plant J.">
        <title>The AtGRF family of putative transcription factors is involved in leaf and cotyledon growth in Arabidopsis.</title>
        <authorList>
            <person name="Kim J.H."/>
            <person name="Choi D."/>
            <person name="Kende H."/>
        </authorList>
    </citation>
    <scope>GENE FAMILY</scope>
    <scope>NOMENCLATURE</scope>
    <scope>TISSUE SPECIFICITY</scope>
</reference>
<reference key="4">
    <citation type="journal article" date="2004" name="Mol. Cell">
        <title>Computational identification of plant microRNAs and their targets, including a stress-induced miRNA.</title>
        <authorList>
            <person name="Jones-Rhoades M.W."/>
            <person name="Bartel D.P."/>
        </authorList>
    </citation>
    <scope>INDUCTION</scope>
</reference>
<reference key="5">
    <citation type="journal article" date="2009" name="Physiol. Plantarum">
        <title>Ectopic expression of miR396 suppresses GRF target gene expression and alters leaf growth in Arabidopsis.</title>
        <authorList>
            <person name="Liu D."/>
            <person name="Song Y."/>
            <person name="Chen Z."/>
            <person name="Yu D."/>
        </authorList>
    </citation>
    <scope>INDUCTION</scope>
</reference>
<sequence length="493" mass="54609">MRMLLGIPYVDKSVLSNSVLERGKQDKSKLLLVDKCHYELDVEERKEDFVGGFGFGVVENSHKDVMVLPHHHYYPSYSSPSSSSLCYCSAGVSDPMFSVSSNQAYTSSHSGMFTPAGSGSAAVTVADPFFSLSSSGEMRRSMNEDAGAAFSEAQWHELERQRNIYKYMMASVPVPPELLTPFPKNHQSNTNPDVDTYRSGMFSIYADYKNLPLSMWMTVTVAVATGGSLQLGIASSASNNTADLEPWRCKRTDGKKWRCSRNVIPDQKYCERHTHKSRPRSRKHVESSHQSSHHNDIRTAKNDTSQLVRTYPQFYGQPISQIPVLSTLPSASSPYDHHRGLRWFTKEDDAIGTLNPETQEAVQLKVGSSRELKRGFDYDLNFRQKEPIVDQSFGALQGLLSLNQTPQHNQETRQFVVEGKQDEAMGSSLTLSMAGGGMEETEGTNQHQWVSHEGPSWLYSTTPGGPLAEALCLGVSNNPSSSTTTSSCSRSSS</sequence>